<proteinExistence type="evidence at protein level"/>
<protein>
    <recommendedName>
        <fullName evidence="1">Tryptophan synthase alpha chain</fullName>
        <ecNumber evidence="1">4.2.1.20</ecNumber>
    </recommendedName>
</protein>
<organism>
    <name type="scientific">Klebsiella aerogenes</name>
    <name type="common">Enterobacter aerogenes</name>
    <dbReference type="NCBI Taxonomy" id="548"/>
    <lineage>
        <taxon>Bacteria</taxon>
        <taxon>Pseudomonadati</taxon>
        <taxon>Pseudomonadota</taxon>
        <taxon>Gammaproteobacteria</taxon>
        <taxon>Enterobacterales</taxon>
        <taxon>Enterobacteriaceae</taxon>
        <taxon>Klebsiella/Raoultella group</taxon>
        <taxon>Klebsiella</taxon>
    </lineage>
</organism>
<comment type="function">
    <text evidence="1">The alpha subunit is responsible for the aldol cleavage of indoleglycerol phosphate to indole and glyceraldehyde 3-phosphate.</text>
</comment>
<comment type="catalytic activity">
    <reaction evidence="1">
        <text>(1S,2R)-1-C-(indol-3-yl)glycerol 3-phosphate + L-serine = D-glyceraldehyde 3-phosphate + L-tryptophan + H2O</text>
        <dbReference type="Rhea" id="RHEA:10532"/>
        <dbReference type="ChEBI" id="CHEBI:15377"/>
        <dbReference type="ChEBI" id="CHEBI:33384"/>
        <dbReference type="ChEBI" id="CHEBI:57912"/>
        <dbReference type="ChEBI" id="CHEBI:58866"/>
        <dbReference type="ChEBI" id="CHEBI:59776"/>
        <dbReference type="EC" id="4.2.1.20"/>
    </reaction>
</comment>
<comment type="pathway">
    <text evidence="1">Amino-acid biosynthesis; L-tryptophan biosynthesis; L-tryptophan from chorismate: step 5/5.</text>
</comment>
<comment type="subunit">
    <text>Tetramer of two alpha and two beta chains.</text>
</comment>
<comment type="similarity">
    <text evidence="1">Belongs to the TrpA family.</text>
</comment>
<feature type="chain" id="PRO_0000098792" description="Tryptophan synthase alpha chain">
    <location>
        <begin position="1"/>
        <end position="269"/>
    </location>
</feature>
<feature type="active site" description="Proton acceptor" evidence="1">
    <location>
        <position position="49"/>
    </location>
</feature>
<feature type="active site" description="Proton acceptor" evidence="1">
    <location>
        <position position="60"/>
    </location>
</feature>
<feature type="sequence conflict" description="In Ref. 2; AA sequence." evidence="2" ref="2">
    <original>E</original>
    <variation>Q</variation>
    <location>
        <position position="2"/>
    </location>
</feature>
<feature type="sequence conflict" description="In Ref. 2; AA sequence." evidence="2" ref="2">
    <original>N</original>
    <variation>K</variation>
    <location>
        <position position="13"/>
    </location>
</feature>
<feature type="sequence conflict" description="In Ref. 2; AA sequence." evidence="2" ref="2">
    <original>Q</original>
    <variation>R</variation>
    <location>
        <position position="15"/>
    </location>
</feature>
<feature type="sequence conflict" description="In Ref. 2; AA sequence." evidence="2" ref="2">
    <original>T</original>
    <variation>I</variation>
    <location>
        <position position="24"/>
    </location>
</feature>
<feature type="sequence conflict" description="In Ref. 2; AA sequence." evidence="2" ref="2">
    <original>P</original>
    <variation>T</variation>
    <location>
        <position position="30"/>
    </location>
</feature>
<feature type="sequence conflict" description="In Ref. 2; AA sequence." evidence="2" ref="2">
    <original>D</original>
    <variation>N</variation>
    <location>
        <position position="56"/>
    </location>
</feature>
<feature type="sequence conflict" description="In Ref. 2; AA sequence." evidence="2" ref="2">
    <original>A</original>
    <variation>L</variation>
    <location>
        <position position="87"/>
    </location>
</feature>
<feature type="sequence conflict" description="In Ref. 2; AA sequence." evidence="2" ref="2">
    <original>K</original>
    <variation>N</variation>
    <location>
        <position position="91"/>
    </location>
</feature>
<feature type="sequence conflict" description="In Ref. 2; AA sequence." evidence="2" ref="2">
    <original>L</original>
    <variation>K</variation>
    <location>
        <position position="105"/>
    </location>
</feature>
<accession>P00930</accession>
<gene>
    <name evidence="1" type="primary">trpA</name>
</gene>
<reference key="1">
    <citation type="journal article" date="1981" name="Nucleic Acids Res.">
        <title>Comparison of the nucleoside sequence of trpA and sequences immediately beyond the trp operon of Klebsiella aerogenes. Salmonella typhimurium and Escherichia coli.</title>
        <authorList>
            <person name="Nichols B.P."/>
            <person name="Blumenberg M."/>
            <person name="Yanofsky C."/>
        </authorList>
    </citation>
    <scope>NUCLEOTIDE SEQUENCE [GENOMIC DNA]</scope>
</reference>
<reference key="2">
    <citation type="journal article" date="1973" name="J. Biol. Chem.">
        <title>Amino acid sequence studies with the tryptophan synthetase alpha chain of Aerobacter aerogenes.</title>
        <authorList>
            <person name="Li S.-L."/>
            <person name="Yanofsky C."/>
        </authorList>
    </citation>
    <scope>PROTEIN SEQUENCE</scope>
</reference>
<sequence length="269" mass="28544">MERYETLFAQLKNRQEGAFVPFVTLGDPGPEQSLKIIDALIEGGADALELGIPFSDPLADGPTIQGAALRAFAAGVTPAQCFEMLAAIRQKHPTIPIGLLMYANLVFSPGIDAFYAQCARVGVDSVLVADVPVEESAPFRQAAMRHNIAPIFICPPNADDDLLRQIASYGRGYTYLLSRAGVTGAENRAALPLHHLVEKLAEYHAAPPLQGFGISAPEQVSAAIDAGAAGAISGSAIVKIIERHLDEPQTMLDELKAFVQSLKAATKTA</sequence>
<name>TRPA_KLEAE</name>
<dbReference type="EC" id="4.2.1.20" evidence="1"/>
<dbReference type="EMBL" id="V00630">
    <property type="protein sequence ID" value="CAA23902.1"/>
    <property type="molecule type" value="Genomic_DNA"/>
</dbReference>
<dbReference type="EMBL" id="J01738">
    <property type="protein sequence ID" value="AAA25145.1"/>
    <property type="molecule type" value="Genomic_DNA"/>
</dbReference>
<dbReference type="SMR" id="P00930"/>
<dbReference type="STRING" id="548.EAG7_01141"/>
<dbReference type="UniPathway" id="UPA00035">
    <property type="reaction ID" value="UER00044"/>
</dbReference>
<dbReference type="GO" id="GO:0005829">
    <property type="term" value="C:cytosol"/>
    <property type="evidence" value="ECO:0007669"/>
    <property type="project" value="TreeGrafter"/>
</dbReference>
<dbReference type="GO" id="GO:0004834">
    <property type="term" value="F:tryptophan synthase activity"/>
    <property type="evidence" value="ECO:0007669"/>
    <property type="project" value="UniProtKB-UniRule"/>
</dbReference>
<dbReference type="CDD" id="cd04724">
    <property type="entry name" value="Tryptophan_synthase_alpha"/>
    <property type="match status" value="1"/>
</dbReference>
<dbReference type="FunFam" id="3.20.20.70:FF:000037">
    <property type="entry name" value="Tryptophan synthase alpha chain"/>
    <property type="match status" value="1"/>
</dbReference>
<dbReference type="Gene3D" id="3.20.20.70">
    <property type="entry name" value="Aldolase class I"/>
    <property type="match status" value="1"/>
</dbReference>
<dbReference type="HAMAP" id="MF_00131">
    <property type="entry name" value="Trp_synth_alpha"/>
    <property type="match status" value="1"/>
</dbReference>
<dbReference type="InterPro" id="IPR013785">
    <property type="entry name" value="Aldolase_TIM"/>
</dbReference>
<dbReference type="InterPro" id="IPR011060">
    <property type="entry name" value="RibuloseP-bd_barrel"/>
</dbReference>
<dbReference type="InterPro" id="IPR018204">
    <property type="entry name" value="Trp_synthase_alpha_AS"/>
</dbReference>
<dbReference type="InterPro" id="IPR002028">
    <property type="entry name" value="Trp_synthase_suA"/>
</dbReference>
<dbReference type="NCBIfam" id="TIGR00262">
    <property type="entry name" value="trpA"/>
    <property type="match status" value="1"/>
</dbReference>
<dbReference type="PANTHER" id="PTHR43406:SF1">
    <property type="entry name" value="TRYPTOPHAN SYNTHASE ALPHA CHAIN, CHLOROPLASTIC"/>
    <property type="match status" value="1"/>
</dbReference>
<dbReference type="PANTHER" id="PTHR43406">
    <property type="entry name" value="TRYPTOPHAN SYNTHASE, ALPHA CHAIN"/>
    <property type="match status" value="1"/>
</dbReference>
<dbReference type="Pfam" id="PF00290">
    <property type="entry name" value="Trp_syntA"/>
    <property type="match status" value="1"/>
</dbReference>
<dbReference type="SUPFAM" id="SSF51366">
    <property type="entry name" value="Ribulose-phoshate binding barrel"/>
    <property type="match status" value="1"/>
</dbReference>
<dbReference type="PROSITE" id="PS00167">
    <property type="entry name" value="TRP_SYNTHASE_ALPHA"/>
    <property type="match status" value="1"/>
</dbReference>
<keyword id="KW-0028">Amino-acid biosynthesis</keyword>
<keyword id="KW-0057">Aromatic amino acid biosynthesis</keyword>
<keyword id="KW-0903">Direct protein sequencing</keyword>
<keyword id="KW-0456">Lyase</keyword>
<keyword id="KW-0822">Tryptophan biosynthesis</keyword>
<evidence type="ECO:0000255" key="1">
    <source>
        <dbReference type="HAMAP-Rule" id="MF_00131"/>
    </source>
</evidence>
<evidence type="ECO:0000305" key="2"/>